<comment type="function">
    <text evidence="1">Forms serotonin (5-hydroxytryptamine/5-HT3)-activated cation-selective channel complexes, which when activated cause fast, depolarizing responses in neurons.</text>
</comment>
<comment type="catalytic activity">
    <reaction evidence="1">
        <text>Na(+)(in) = Na(+)(out)</text>
        <dbReference type="Rhea" id="RHEA:34963"/>
        <dbReference type="ChEBI" id="CHEBI:29101"/>
    </reaction>
</comment>
<comment type="catalytic activity">
    <reaction evidence="1">
        <text>K(+)(in) = K(+)(out)</text>
        <dbReference type="Rhea" id="RHEA:29463"/>
        <dbReference type="ChEBI" id="CHEBI:29103"/>
    </reaction>
</comment>
<comment type="catalytic activity">
    <reaction evidence="1">
        <text>Ca(2+)(in) = Ca(2+)(out)</text>
        <dbReference type="Rhea" id="RHEA:29671"/>
        <dbReference type="ChEBI" id="CHEBI:29108"/>
    </reaction>
</comment>
<comment type="catalytic activity">
    <reaction evidence="1">
        <text>Mg(2+)(in) = Mg(2+)(out)</text>
        <dbReference type="Rhea" id="RHEA:29827"/>
        <dbReference type="ChEBI" id="CHEBI:18420"/>
    </reaction>
</comment>
<comment type="subunit">
    <text evidence="1">Forms homopentameric as well as heteropentameric serotonin-activated cation-selective channel complexes with HTR3B or HTR3C or HTR3D or HTR3E. The homomeric complex is functional but exhibits low conductance with modified voltage dependence, and decreased agonist and antagonist affinity. Heteropentameric complexes display properties which resemble that of neuronal serotonin-activated channels in vivo. Interacts with RIC3.</text>
</comment>
<comment type="interaction">
    <interactant intactId="EBI-11295097">
        <id>P23979</id>
    </interactant>
    <interactant intactId="EBI-11295097">
        <id>P23979</id>
        <label>Htr3a</label>
    </interactant>
    <organismsDiffer>false</organismsDiffer>
    <experiments>2</experiments>
</comment>
<comment type="interaction">
    <interactant intactId="EBI-15824923">
        <id>P23979-1</id>
    </interactant>
    <interactant intactId="EBI-15824923">
        <id>P23979-1</id>
        <label>Htr3a</label>
    </interactant>
    <organismsDiffer>false</organismsDiffer>
    <experiments>7</experiments>
</comment>
<comment type="subcellular location">
    <subcellularLocation>
        <location evidence="1">Postsynaptic cell membrane</location>
        <topology evidence="3">Multi-pass membrane protein</topology>
    </subcellularLocation>
    <subcellularLocation>
        <location evidence="1">Cell membrane</location>
        <topology evidence="3">Multi-pass membrane protein</topology>
    </subcellularLocation>
</comment>
<comment type="alternative products">
    <event type="alternative splicing"/>
    <isoform>
        <id>P23979-1</id>
        <name>5-HT3R-A</name>
        <sequence type="displayed"/>
    </isoform>
    <isoform>
        <id>P23979-2</id>
        <name>5-HT3R-AS</name>
        <sequence type="described" ref="VSP_000079"/>
    </isoform>
</comment>
<comment type="tissue specificity">
    <text>Brain, spinal cord, and heart.</text>
</comment>
<comment type="domain">
    <text evidence="1">The HA-stretch region of HTR3A seems to be responsible for the low conductance of HTR3A homomers compared to that of HTR3A/HTR3B heteromers.</text>
</comment>
<comment type="similarity">
    <text evidence="4">Belongs to the ligand-gated ion channel (TC 1.A.9) family. 5-hydroxytryptamine receptor (TC 1.A.9.2) subfamily. HTR3A sub-subfamily.</text>
</comment>
<sequence>MRLCIPQVLLALFLSMLTAPGEGSRRRATQARDTTQPALLRLSDHLLANYKKGVRPVRDWRKPTTVSIDVIMYAILNVDEKNQVLTTYIWYRQYWTDEFLQWTPEDFDNVTKLSIPTDSIWVPDILINEFVDVGKSPNIPYVYVHHRGEVQNYKPLQLVTACSLDIYNFPFDVQNCSLTFTSWLHTIQDINITLWRSPEEVRSDKSIFINQGEWELLEVFPQFKEFSIDISNSYAEMKFYVIIRRRPLFYAVSLLLPSIFLMVVDIVGFCLPPDSGERVSFKITLLLGYSVFLIIVSDTLPATAIGTPLIGVYFVVCMALLVISLAETIFIVRLVHKQDLQRPVPDWLRHLVLDRIAWILCLGEQPMAHRPPATFQANKTDDCSGSDLLPAMGNHCSHVGGPQDLEKTPRGRGSPLPPPREASLAVRGLLQELSSIRHFLEKRDEMREVARDWLRVGYVLDRLLFRIYLLAVLAYSITLVTLWSIWHYS</sequence>
<dbReference type="EMBL" id="M74425">
    <property type="protein sequence ID" value="AAA37124.1"/>
    <property type="molecule type" value="mRNA"/>
</dbReference>
<dbReference type="EMBL" id="Z22772">
    <property type="protein sequence ID" value="CAA80453.1"/>
    <property type="molecule type" value="Genomic_DNA"/>
</dbReference>
<dbReference type="EMBL" id="Z22773">
    <property type="protein sequence ID" value="CAA80453.1"/>
    <property type="status" value="JOINED"/>
    <property type="molecule type" value="Genomic_DNA"/>
</dbReference>
<dbReference type="EMBL" id="X72395">
    <property type="protein sequence ID" value="CAA51089.1"/>
    <property type="molecule type" value="mRNA"/>
</dbReference>
<dbReference type="EMBL" id="X79283">
    <property type="protein sequence ID" value="CAA55870.1"/>
    <property type="molecule type" value="Genomic_DNA"/>
</dbReference>
<dbReference type="EMBL" id="X79283">
    <property type="protein sequence ID" value="CAA55871.1"/>
    <property type="molecule type" value="Genomic_DNA"/>
</dbReference>
<dbReference type="EMBL" id="CT009741">
    <property type="status" value="NOT_ANNOTATED_CDS"/>
    <property type="molecule type" value="Genomic_DNA"/>
</dbReference>
<dbReference type="CCDS" id="CCDS52788.1">
    <molecule id="P23979-1"/>
</dbReference>
<dbReference type="CCDS" id="CCDS90559.1">
    <molecule id="P23979-2"/>
</dbReference>
<dbReference type="PIR" id="S41757">
    <property type="entry name" value="S41757"/>
</dbReference>
<dbReference type="RefSeq" id="NP_001093114.1">
    <molecule id="P23979-2"/>
    <property type="nucleotide sequence ID" value="NM_001099644.1"/>
</dbReference>
<dbReference type="RefSeq" id="NP_038589.2">
    <molecule id="P23979-1"/>
    <property type="nucleotide sequence ID" value="NM_013561.2"/>
</dbReference>
<dbReference type="PDB" id="4PIR">
    <property type="method" value="X-ray"/>
    <property type="resolution" value="3.50 A"/>
    <property type="chains" value="A/B/C/D/E=33-487"/>
</dbReference>
<dbReference type="PDB" id="6BE1">
    <property type="method" value="EM"/>
    <property type="resolution" value="4.31 A"/>
    <property type="chains" value="A/B/C/D/E=33-489"/>
</dbReference>
<dbReference type="PDB" id="6DG7">
    <property type="method" value="EM"/>
    <property type="resolution" value="3.32 A"/>
    <property type="chains" value="A/B/C/D/E=35-489"/>
</dbReference>
<dbReference type="PDB" id="6DG8">
    <property type="method" value="EM"/>
    <property type="resolution" value="3.89 A"/>
    <property type="chains" value="A/B/C/D/E=35-489"/>
</dbReference>
<dbReference type="PDB" id="6HIN">
    <property type="method" value="EM"/>
    <property type="resolution" value="4.10 A"/>
    <property type="chains" value="A/B/C/D/E=37-486"/>
</dbReference>
<dbReference type="PDB" id="6HIO">
    <property type="method" value="EM"/>
    <property type="resolution" value="4.20 A"/>
    <property type="chains" value="A/B/C/D/E=36-485"/>
</dbReference>
<dbReference type="PDB" id="6HIQ">
    <property type="method" value="EM"/>
    <property type="resolution" value="3.20 A"/>
    <property type="chains" value="A/B/C/D/E=36-487"/>
</dbReference>
<dbReference type="PDB" id="6NP0">
    <property type="method" value="EM"/>
    <property type="resolution" value="2.92 A"/>
    <property type="chains" value="A/B/C/D/E=1-489"/>
</dbReference>
<dbReference type="PDB" id="6W1J">
    <property type="method" value="EM"/>
    <property type="resolution" value="2.92 A"/>
    <property type="chains" value="A/B/C/D/E=34-489"/>
</dbReference>
<dbReference type="PDB" id="6W1M">
    <property type="method" value="EM"/>
    <property type="resolution" value="3.06 A"/>
    <property type="chains" value="A/B/C/D/E=34-489"/>
</dbReference>
<dbReference type="PDB" id="6W1Y">
    <property type="method" value="EM"/>
    <property type="resolution" value="3.35 A"/>
    <property type="chains" value="A/B/C/D/E=34-489"/>
</dbReference>
<dbReference type="PDB" id="6Y1Z">
    <property type="method" value="EM"/>
    <property type="resolution" value="2.82 A"/>
    <property type="chains" value="A/B/C/D/E=21-489"/>
</dbReference>
<dbReference type="PDB" id="8FRW">
    <property type="method" value="EM"/>
    <property type="resolution" value="2.92 A"/>
    <property type="chains" value="A/B/C/D/E=28-489"/>
</dbReference>
<dbReference type="PDB" id="8FRX">
    <property type="method" value="EM"/>
    <property type="resolution" value="2.70 A"/>
    <property type="chains" value="A/B/C/D/E=28-489"/>
</dbReference>
<dbReference type="PDB" id="8FRZ">
    <property type="method" value="EM"/>
    <property type="resolution" value="2.75 A"/>
    <property type="chains" value="A/B/C/D/E=28-489"/>
</dbReference>
<dbReference type="PDB" id="8FSB">
    <property type="method" value="EM"/>
    <property type="resolution" value="2.75 A"/>
    <property type="chains" value="A/B/C/D/E=28-489"/>
</dbReference>
<dbReference type="PDB" id="8FSP">
    <property type="method" value="EM"/>
    <property type="resolution" value="3.79 A"/>
    <property type="chains" value="A/B/C/D/E=28-489"/>
</dbReference>
<dbReference type="PDB" id="8FSZ">
    <property type="method" value="EM"/>
    <property type="resolution" value="3.79 A"/>
    <property type="chains" value="A/B/C/D/E=28-489"/>
</dbReference>
<dbReference type="PDBsum" id="4PIR"/>
<dbReference type="PDBsum" id="6BE1"/>
<dbReference type="PDBsum" id="6DG7"/>
<dbReference type="PDBsum" id="6DG8"/>
<dbReference type="PDBsum" id="6HIN"/>
<dbReference type="PDBsum" id="6HIO"/>
<dbReference type="PDBsum" id="6HIQ"/>
<dbReference type="PDBsum" id="6NP0"/>
<dbReference type="PDBsum" id="6W1J"/>
<dbReference type="PDBsum" id="6W1M"/>
<dbReference type="PDBsum" id="6W1Y"/>
<dbReference type="PDBsum" id="6Y1Z"/>
<dbReference type="PDBsum" id="8FRW"/>
<dbReference type="PDBsum" id="8FRX"/>
<dbReference type="PDBsum" id="8FRZ"/>
<dbReference type="PDBsum" id="8FSB"/>
<dbReference type="PDBsum" id="8FSP"/>
<dbReference type="PDBsum" id="8FSZ"/>
<dbReference type="EMDB" id="EMD-0225"/>
<dbReference type="EMDB" id="EMD-0226"/>
<dbReference type="EMDB" id="EMD-0227"/>
<dbReference type="EMDB" id="EMD-0228"/>
<dbReference type="EMDB" id="EMD-0469"/>
<dbReference type="EMDB" id="EMD-10673"/>
<dbReference type="EMDB" id="EMD-10691"/>
<dbReference type="EMDB" id="EMD-10692"/>
<dbReference type="EMDB" id="EMD-10693"/>
<dbReference type="EMDB" id="EMD-15471"/>
<dbReference type="EMDB" id="EMD-15689"/>
<dbReference type="EMDB" id="EMD-16384"/>
<dbReference type="EMDB" id="EMD-16385"/>
<dbReference type="EMDB" id="EMD-16386"/>
<dbReference type="EMDB" id="EMD-16387"/>
<dbReference type="EMDB" id="EMD-16555"/>
<dbReference type="EMDB" id="EMD-16557"/>
<dbReference type="EMDB" id="EMD-29409"/>
<dbReference type="EMDB" id="EMD-29410"/>
<dbReference type="EMDB" id="EMD-29411"/>
<dbReference type="EMDB" id="EMD-29418"/>
<dbReference type="EMDB" id="EMD-29421"/>
<dbReference type="EMDB" id="EMD-29422"/>
<dbReference type="EMDB" id="EMD-3108"/>
<dbReference type="EMDB" id="EMD-7088"/>
<dbReference type="EMDB" id="EMD-7882"/>
<dbReference type="EMDB" id="EMD-7883"/>
<dbReference type="SMR" id="P23979"/>
<dbReference type="ComplexPortal" id="CPX-274">
    <property type="entry name" value="5-hydroxytryptamine-3A receptor complex"/>
</dbReference>
<dbReference type="ComplexPortal" id="CPX-275">
    <property type="entry name" value="5-hydroxytryptamine-3A/B receptor complex"/>
</dbReference>
<dbReference type="DIP" id="DIP-48769N"/>
<dbReference type="FunCoup" id="P23979">
    <property type="interactions" value="193"/>
</dbReference>
<dbReference type="STRING" id="10090.ENSMUSP00000003826"/>
<dbReference type="BindingDB" id="P23979"/>
<dbReference type="ChEMBL" id="CHEMBL4972"/>
<dbReference type="DrugCentral" id="P23979"/>
<dbReference type="GuidetoPHARMACOLOGY" id="373"/>
<dbReference type="GlyCosmos" id="P23979">
    <property type="glycosylation" value="3 sites, No reported glycans"/>
</dbReference>
<dbReference type="GlyGen" id="P23979">
    <property type="glycosylation" value="3 sites"/>
</dbReference>
<dbReference type="PhosphoSitePlus" id="P23979"/>
<dbReference type="SwissPalm" id="P23979"/>
<dbReference type="PaxDb" id="10090-ENSMUSP00000003826"/>
<dbReference type="ProteomicsDB" id="285992">
    <molecule id="P23979-1"/>
</dbReference>
<dbReference type="ProteomicsDB" id="285993">
    <molecule id="P23979-2"/>
</dbReference>
<dbReference type="ProteomicsDB" id="361516"/>
<dbReference type="ABCD" id="P23979">
    <property type="antibodies" value="1 sequenced antibody"/>
</dbReference>
<dbReference type="Antibodypedia" id="18364">
    <property type="antibodies" value="413 antibodies from 35 providers"/>
</dbReference>
<dbReference type="DNASU" id="15561"/>
<dbReference type="Ensembl" id="ENSMUST00000003826.8">
    <molecule id="P23979-1"/>
    <property type="protein sequence ID" value="ENSMUSP00000003826.8"/>
    <property type="gene ID" value="ENSMUSG00000032269.9"/>
</dbReference>
<dbReference type="Ensembl" id="ENSMUST00000217289.2">
    <molecule id="P23979-2"/>
    <property type="protein sequence ID" value="ENSMUSP00000150647.2"/>
    <property type="gene ID" value="ENSMUSG00000032269.9"/>
</dbReference>
<dbReference type="GeneID" id="15561"/>
<dbReference type="KEGG" id="mmu:15561"/>
<dbReference type="AGR" id="MGI:96282"/>
<dbReference type="CTD" id="3359"/>
<dbReference type="MGI" id="MGI:96282">
    <property type="gene designation" value="Htr3a"/>
</dbReference>
<dbReference type="VEuPathDB" id="HostDB:ENSMUSG00000032269"/>
<dbReference type="eggNOG" id="KOG3645">
    <property type="taxonomic scope" value="Eukaryota"/>
</dbReference>
<dbReference type="GeneTree" id="ENSGT00940000157705"/>
<dbReference type="HOGENOM" id="CLU_018074_5_0_1"/>
<dbReference type="InParanoid" id="P23979"/>
<dbReference type="OMA" id="KFFVVIR"/>
<dbReference type="OrthoDB" id="410315at2759"/>
<dbReference type="PhylomeDB" id="P23979"/>
<dbReference type="TreeFam" id="TF315605"/>
<dbReference type="Reactome" id="R-MMU-112314">
    <property type="pathway name" value="Neurotransmitter receptors and postsynaptic signal transmission"/>
</dbReference>
<dbReference type="BioGRID-ORCS" id="15561">
    <property type="hits" value="1 hit in 78 CRISPR screens"/>
</dbReference>
<dbReference type="EvolutionaryTrace" id="P23979"/>
<dbReference type="PRO" id="PR:P23979"/>
<dbReference type="Proteomes" id="UP000000589">
    <property type="component" value="Chromosome 9"/>
</dbReference>
<dbReference type="RNAct" id="P23979">
    <property type="molecule type" value="protein"/>
</dbReference>
<dbReference type="Bgee" id="ENSMUSG00000032269">
    <property type="expression patterns" value="Expressed in lumbar dorsal root ganglion and 56 other cell types or tissues"/>
</dbReference>
<dbReference type="GO" id="GO:0032154">
    <property type="term" value="C:cleavage furrow"/>
    <property type="evidence" value="ECO:0007669"/>
    <property type="project" value="Ensembl"/>
</dbReference>
<dbReference type="GO" id="GO:0045211">
    <property type="term" value="C:postsynaptic membrane"/>
    <property type="evidence" value="ECO:0007669"/>
    <property type="project" value="UniProtKB-SubCell"/>
</dbReference>
<dbReference type="GO" id="GO:1904602">
    <property type="term" value="C:serotonin-activated cation-selective channel complex"/>
    <property type="evidence" value="ECO:0000353"/>
    <property type="project" value="ComplexPortal"/>
</dbReference>
<dbReference type="GO" id="GO:0042802">
    <property type="term" value="F:identical protein binding"/>
    <property type="evidence" value="ECO:0000353"/>
    <property type="project" value="IntAct"/>
</dbReference>
<dbReference type="GO" id="GO:0099507">
    <property type="term" value="F:ligand-gated monoatomic ion channel activity involved in regulation of presynaptic membrane potential"/>
    <property type="evidence" value="ECO:0000314"/>
    <property type="project" value="SynGO"/>
</dbReference>
<dbReference type="GO" id="GO:0051378">
    <property type="term" value="F:serotonin binding"/>
    <property type="evidence" value="ECO:0000266"/>
    <property type="project" value="MGI"/>
</dbReference>
<dbReference type="GO" id="GO:0022850">
    <property type="term" value="F:serotonin-gated monoatomic cation channel activity"/>
    <property type="evidence" value="ECO:0000266"/>
    <property type="project" value="MGI"/>
</dbReference>
<dbReference type="GO" id="GO:0098662">
    <property type="term" value="P:inorganic cation transmembrane transport"/>
    <property type="evidence" value="ECO:0000314"/>
    <property type="project" value="ComplexPortal"/>
</dbReference>
<dbReference type="GO" id="GO:0007210">
    <property type="term" value="P:serotonin receptor signaling pathway"/>
    <property type="evidence" value="ECO:0000314"/>
    <property type="project" value="ComplexPortal"/>
</dbReference>
<dbReference type="GO" id="GO:0140227">
    <property type="term" value="P:serotonin-gated cation-selective signaling pathway"/>
    <property type="evidence" value="ECO:0007669"/>
    <property type="project" value="Ensembl"/>
</dbReference>
<dbReference type="CDD" id="cd19011">
    <property type="entry name" value="LGIC_ECD_5-HT3A"/>
    <property type="match status" value="1"/>
</dbReference>
<dbReference type="CDD" id="cd19063">
    <property type="entry name" value="LGIC_TM_5-HT3"/>
    <property type="match status" value="1"/>
</dbReference>
<dbReference type="FunFam" id="1.20.58.390:FF:000020">
    <property type="entry name" value="5-hydroxytryptamine (serotonin) receptor 3A"/>
    <property type="match status" value="1"/>
</dbReference>
<dbReference type="FunFam" id="2.70.170.10:FF:000017">
    <property type="entry name" value="5-hydroxytryptamine receptor 3A"/>
    <property type="match status" value="1"/>
</dbReference>
<dbReference type="Gene3D" id="2.70.170.10">
    <property type="entry name" value="Neurotransmitter-gated ion-channel ligand-binding domain"/>
    <property type="match status" value="1"/>
</dbReference>
<dbReference type="Gene3D" id="1.20.58.390">
    <property type="entry name" value="Neurotransmitter-gated ion-channel transmembrane domain"/>
    <property type="match status" value="1"/>
</dbReference>
<dbReference type="InterPro" id="IPR008132">
    <property type="entry name" value="5HT3_rcpt"/>
</dbReference>
<dbReference type="InterPro" id="IPR008133">
    <property type="entry name" value="5HT3_rcpt_A"/>
</dbReference>
<dbReference type="InterPro" id="IPR049944">
    <property type="entry name" value="LGIC_TM_5-HT3"/>
</dbReference>
<dbReference type="InterPro" id="IPR006202">
    <property type="entry name" value="Neur_chan_lig-bd"/>
</dbReference>
<dbReference type="InterPro" id="IPR036734">
    <property type="entry name" value="Neur_chan_lig-bd_sf"/>
</dbReference>
<dbReference type="InterPro" id="IPR006201">
    <property type="entry name" value="Neur_channel"/>
</dbReference>
<dbReference type="InterPro" id="IPR036719">
    <property type="entry name" value="Neuro-gated_channel_TM_sf"/>
</dbReference>
<dbReference type="InterPro" id="IPR038050">
    <property type="entry name" value="Neuro_actylchol_rec"/>
</dbReference>
<dbReference type="InterPro" id="IPR006029">
    <property type="entry name" value="Neurotrans-gated_channel_TM"/>
</dbReference>
<dbReference type="InterPro" id="IPR018000">
    <property type="entry name" value="Neurotransmitter_ion_chnl_CS"/>
</dbReference>
<dbReference type="NCBIfam" id="TIGR00860">
    <property type="entry name" value="LIC"/>
    <property type="match status" value="1"/>
</dbReference>
<dbReference type="PANTHER" id="PTHR18945">
    <property type="entry name" value="NEUROTRANSMITTER GATED ION CHANNEL"/>
    <property type="match status" value="1"/>
</dbReference>
<dbReference type="Pfam" id="PF02931">
    <property type="entry name" value="Neur_chan_LBD"/>
    <property type="match status" value="1"/>
</dbReference>
<dbReference type="Pfam" id="PF02932">
    <property type="entry name" value="Neur_chan_memb"/>
    <property type="match status" value="1"/>
</dbReference>
<dbReference type="PRINTS" id="PR01709">
    <property type="entry name" value="5HT3ARECEPTR"/>
</dbReference>
<dbReference type="PRINTS" id="PR01708">
    <property type="entry name" value="5HT3RECEPTOR"/>
</dbReference>
<dbReference type="PRINTS" id="PR00252">
    <property type="entry name" value="NRIONCHANNEL"/>
</dbReference>
<dbReference type="SUPFAM" id="SSF90112">
    <property type="entry name" value="Neurotransmitter-gated ion-channel transmembrane pore"/>
    <property type="match status" value="1"/>
</dbReference>
<dbReference type="SUPFAM" id="SSF63712">
    <property type="entry name" value="Nicotinic receptor ligand binding domain-like"/>
    <property type="match status" value="1"/>
</dbReference>
<dbReference type="PROSITE" id="PS00236">
    <property type="entry name" value="NEUROTR_ION_CHANNEL"/>
    <property type="match status" value="1"/>
</dbReference>
<name>5HT3A_MOUSE</name>
<organism>
    <name type="scientific">Mus musculus</name>
    <name type="common">Mouse</name>
    <dbReference type="NCBI Taxonomy" id="10090"/>
    <lineage>
        <taxon>Eukaryota</taxon>
        <taxon>Metazoa</taxon>
        <taxon>Chordata</taxon>
        <taxon>Craniata</taxon>
        <taxon>Vertebrata</taxon>
        <taxon>Euteleostomi</taxon>
        <taxon>Mammalia</taxon>
        <taxon>Eutheria</taxon>
        <taxon>Euarchontoglires</taxon>
        <taxon>Glires</taxon>
        <taxon>Rodentia</taxon>
        <taxon>Myomorpha</taxon>
        <taxon>Muroidea</taxon>
        <taxon>Muridae</taxon>
        <taxon>Murinae</taxon>
        <taxon>Mus</taxon>
        <taxon>Mus</taxon>
    </lineage>
</organism>
<gene>
    <name evidence="6" type="primary">Htr3a</name>
    <name type="synonym">5ht3</name>
    <name type="synonym">Htr3</name>
</gene>
<feature type="signal peptide" evidence="2">
    <location>
        <begin position="1"/>
        <end position="23"/>
    </location>
</feature>
<feature type="chain" id="PRO_0000000409" description="5-hydroxytryptamine receptor 3A">
    <location>
        <begin position="24"/>
        <end position="489"/>
    </location>
</feature>
<feature type="topological domain" description="Extracellular" evidence="5">
    <location>
        <begin position="24"/>
        <end position="246"/>
    </location>
</feature>
<feature type="transmembrane region" description="Helical; Name=1" evidence="2">
    <location>
        <begin position="247"/>
        <end position="273"/>
    </location>
</feature>
<feature type="topological domain" description="Cytoplasmic" evidence="5">
    <location>
        <begin position="274"/>
        <end position="278"/>
    </location>
</feature>
<feature type="transmembrane region" description="Helical; Name=2" evidence="2">
    <location>
        <begin position="279"/>
        <end position="297"/>
    </location>
</feature>
<feature type="topological domain" description="Extracellular" evidence="5">
    <location>
        <begin position="298"/>
        <end position="307"/>
    </location>
</feature>
<feature type="transmembrane region" description="Helical; Name=3" evidence="2">
    <location>
        <begin position="308"/>
        <end position="326"/>
    </location>
</feature>
<feature type="topological domain" description="Cytoplasmic" evidence="5">
    <location>
        <begin position="327"/>
        <end position="466"/>
    </location>
</feature>
<feature type="transmembrane region" description="Helical; Name=4" evidence="2">
    <location>
        <begin position="467"/>
        <end position="486"/>
    </location>
</feature>
<feature type="topological domain" description="Extracellular" evidence="5">
    <location>
        <begin position="487"/>
        <end position="489"/>
    </location>
</feature>
<feature type="region of interest" description="HA-stretch; determines single-channel conductance in 5-HT3 receptors" evidence="1">
    <location>
        <begin position="425"/>
        <end position="461"/>
    </location>
</feature>
<feature type="glycosylation site" description="N-linked (GlcNAc...) asparagine" evidence="2">
    <location>
        <position position="109"/>
    </location>
</feature>
<feature type="glycosylation site" description="N-linked (GlcNAc...) asparagine" evidence="2">
    <location>
        <position position="175"/>
    </location>
</feature>
<feature type="glycosylation site" description="N-linked (GlcNAc...) asparagine" evidence="2">
    <location>
        <position position="191"/>
    </location>
</feature>
<feature type="disulfide bond" evidence="3 7">
    <location>
        <begin position="162"/>
        <end position="176"/>
    </location>
</feature>
<feature type="splice variant" id="VSP_000079" description="In isoform 5-HT3R-AS." evidence="4">
    <location>
        <begin position="385"/>
        <end position="390"/>
    </location>
</feature>
<feature type="sequence conflict" description="In Ref. 2; CAA80453 and 1; AAA37124." evidence="4" ref="2 1">
    <original>AR</original>
    <variation>E</variation>
    <location>
        <begin position="31"/>
        <end position="32"/>
    </location>
</feature>
<feature type="sequence conflict" description="In Ref. 3; CAA51089." evidence="4" ref="3">
    <original>I</original>
    <variation>V</variation>
    <location>
        <position position="75"/>
    </location>
</feature>
<feature type="sequence conflict" description="In Ref. 2; CAA80453 and 1; AAA37124." evidence="4" ref="2 1">
    <location>
        <position position="304"/>
    </location>
</feature>
<feature type="sequence conflict" description="In Ref. 2; CAA80453." evidence="4" ref="2">
    <original>S</original>
    <variation>SS</variation>
    <location>
        <position position="386"/>
    </location>
</feature>
<feature type="sequence conflict" description="In Ref. 4; CAA55870/CAA55871." evidence="4" ref="4">
    <original>H</original>
    <variation>T</variation>
    <location>
        <position position="395"/>
    </location>
</feature>
<feature type="helix" evidence="12">
    <location>
        <begin position="40"/>
        <end position="47"/>
    </location>
</feature>
<feature type="strand" evidence="11">
    <location>
        <begin position="52"/>
        <end position="54"/>
    </location>
</feature>
<feature type="strand" evidence="13">
    <location>
        <begin position="58"/>
        <end position="62"/>
    </location>
</feature>
<feature type="strand" evidence="12">
    <location>
        <begin position="64"/>
        <end position="79"/>
    </location>
</feature>
<feature type="turn" evidence="12">
    <location>
        <begin position="80"/>
        <end position="83"/>
    </location>
</feature>
<feature type="strand" evidence="12">
    <location>
        <begin position="84"/>
        <end position="101"/>
    </location>
</feature>
<feature type="turn" evidence="12">
    <location>
        <begin position="105"/>
        <end position="109"/>
    </location>
</feature>
<feature type="strand" evidence="12">
    <location>
        <begin position="112"/>
        <end position="116"/>
    </location>
</feature>
<feature type="helix" evidence="12">
    <location>
        <begin position="117"/>
        <end position="119"/>
    </location>
</feature>
<feature type="strand" evidence="12">
    <location>
        <begin position="125"/>
        <end position="127"/>
    </location>
</feature>
<feature type="strand" evidence="12">
    <location>
        <begin position="130"/>
        <end position="132"/>
    </location>
</feature>
<feature type="strand" evidence="12">
    <location>
        <begin position="141"/>
        <end position="145"/>
    </location>
</feature>
<feature type="strand" evidence="12">
    <location>
        <begin position="147"/>
        <end position="161"/>
    </location>
</feature>
<feature type="helix" evidence="12">
    <location>
        <begin position="169"/>
        <end position="171"/>
    </location>
</feature>
<feature type="strand" evidence="12">
    <location>
        <begin position="173"/>
        <end position="184"/>
    </location>
</feature>
<feature type="turn" evidence="12">
    <location>
        <begin position="187"/>
        <end position="189"/>
    </location>
</feature>
<feature type="strand" evidence="12">
    <location>
        <begin position="190"/>
        <end position="196"/>
    </location>
</feature>
<feature type="helix" evidence="12">
    <location>
        <begin position="198"/>
        <end position="202"/>
    </location>
</feature>
<feature type="strand" evidence="12">
    <location>
        <begin position="211"/>
        <end position="226"/>
    </location>
</feature>
<feature type="strand" evidence="14">
    <location>
        <begin position="228"/>
        <end position="231"/>
    </location>
</feature>
<feature type="strand" evidence="12">
    <location>
        <begin position="234"/>
        <end position="245"/>
    </location>
</feature>
<feature type="helix" evidence="12">
    <location>
        <begin position="247"/>
        <end position="250"/>
    </location>
</feature>
<feature type="turn" evidence="12">
    <location>
        <begin position="251"/>
        <end position="253"/>
    </location>
</feature>
<feature type="helix" evidence="12">
    <location>
        <begin position="256"/>
        <end position="268"/>
    </location>
</feature>
<feature type="strand" evidence="13">
    <location>
        <begin position="273"/>
        <end position="275"/>
    </location>
</feature>
<feature type="helix" evidence="12">
    <location>
        <begin position="278"/>
        <end position="297"/>
    </location>
</feature>
<feature type="strand" evidence="9">
    <location>
        <begin position="298"/>
        <end position="300"/>
    </location>
</feature>
<feature type="strand" evidence="10">
    <location>
        <begin position="304"/>
        <end position="306"/>
    </location>
</feature>
<feature type="helix" evidence="12">
    <location>
        <begin position="309"/>
        <end position="335"/>
    </location>
</feature>
<feature type="strand" evidence="8">
    <location>
        <begin position="337"/>
        <end position="339"/>
    </location>
</feature>
<feature type="helix" evidence="12">
    <location>
        <begin position="345"/>
        <end position="347"/>
    </location>
</feature>
<feature type="turn" evidence="12">
    <location>
        <begin position="348"/>
        <end position="352"/>
    </location>
</feature>
<feature type="helix" evidence="12">
    <location>
        <begin position="353"/>
        <end position="358"/>
    </location>
</feature>
<feature type="helix" evidence="12">
    <location>
        <begin position="425"/>
        <end position="487"/>
    </location>
</feature>
<keyword id="KW-0002">3D-structure</keyword>
<keyword id="KW-0025">Alternative splicing</keyword>
<keyword id="KW-1003">Cell membrane</keyword>
<keyword id="KW-1015">Disulfide bond</keyword>
<keyword id="KW-0325">Glycoprotein</keyword>
<keyword id="KW-0407">Ion channel</keyword>
<keyword id="KW-0406">Ion transport</keyword>
<keyword id="KW-1071">Ligand-gated ion channel</keyword>
<keyword id="KW-0472">Membrane</keyword>
<keyword id="KW-0628">Postsynaptic cell membrane</keyword>
<keyword id="KW-0675">Receptor</keyword>
<keyword id="KW-1185">Reference proteome</keyword>
<keyword id="KW-0732">Signal</keyword>
<keyword id="KW-0770">Synapse</keyword>
<keyword id="KW-0812">Transmembrane</keyword>
<keyword id="KW-1133">Transmembrane helix</keyword>
<keyword id="KW-0813">Transport</keyword>
<accession>P23979</accession>
<accession>E9QLC0</accession>
<accession>Q61225</accession>
<accession>Q61226</accession>
<proteinExistence type="evidence at protein level"/>
<protein>
    <recommendedName>
        <fullName evidence="5">5-hydroxytryptamine receptor 3A</fullName>
        <shortName>5-HT3-A</shortName>
        <shortName>5-HT3A</shortName>
    </recommendedName>
    <alternativeName>
        <fullName>5-hydroxytryptamine receptor 3</fullName>
        <shortName>5-HT-3</shortName>
        <shortName>5-HT3R</shortName>
    </alternativeName>
    <alternativeName>
        <fullName>Serotonin receptor 3A</fullName>
    </alternativeName>
    <alternativeName>
        <fullName>Serotonin-gated ion channel receptor</fullName>
    </alternativeName>
</protein>
<evidence type="ECO:0000250" key="1">
    <source>
        <dbReference type="UniProtKB" id="P46098"/>
    </source>
</evidence>
<evidence type="ECO:0000255" key="2"/>
<evidence type="ECO:0000269" key="3">
    <source>
    </source>
</evidence>
<evidence type="ECO:0000305" key="4"/>
<evidence type="ECO:0000305" key="5">
    <source>
    </source>
</evidence>
<evidence type="ECO:0000312" key="6">
    <source>
        <dbReference type="MGI" id="MGI:96282"/>
    </source>
</evidence>
<evidence type="ECO:0007744" key="7">
    <source>
        <dbReference type="PDB" id="4PIR"/>
    </source>
</evidence>
<evidence type="ECO:0007829" key="8">
    <source>
        <dbReference type="PDB" id="6DG7"/>
    </source>
</evidence>
<evidence type="ECO:0007829" key="9">
    <source>
        <dbReference type="PDB" id="6HIQ"/>
    </source>
</evidence>
<evidence type="ECO:0007829" key="10">
    <source>
        <dbReference type="PDB" id="6NP0"/>
    </source>
</evidence>
<evidence type="ECO:0007829" key="11">
    <source>
        <dbReference type="PDB" id="6W1Y"/>
    </source>
</evidence>
<evidence type="ECO:0007829" key="12">
    <source>
        <dbReference type="PDB" id="8FRX"/>
    </source>
</evidence>
<evidence type="ECO:0007829" key="13">
    <source>
        <dbReference type="PDB" id="8FRZ"/>
    </source>
</evidence>
<evidence type="ECO:0007829" key="14">
    <source>
        <dbReference type="PDB" id="8FSB"/>
    </source>
</evidence>
<reference key="1">
    <citation type="journal article" date="1991" name="Science">
        <title>Primary structure and functional expression of the 5HT3 receptor, a serotonin-gated ion channel.</title>
        <authorList>
            <person name="Maricq A.V."/>
            <person name="Peterson A.S."/>
            <person name="Brake A.J."/>
            <person name="Myers R.M."/>
            <person name="Julius D."/>
        </authorList>
    </citation>
    <scope>NUCLEOTIDE SEQUENCE [MRNA] (ISOFORM 5-HT3R-A)</scope>
</reference>
<reference key="2">
    <citation type="journal article" date="1994" name="FEBS Lett.">
        <title>Organisation of the murine 5-HT3 receptor gene and assignment to human chromosome 11.</title>
        <authorList>
            <person name="Uetz P."/>
            <person name="Abdelatty F."/>
            <person name="Villarroel A."/>
            <person name="Gundrun R."/>
            <person name="Weiss B."/>
            <person name="Koenen M."/>
        </authorList>
    </citation>
    <scope>NUCLEOTIDE SEQUENCE [GENOMIC DNA] (ISOFORM 5-HT3R-A)</scope>
    <source>
        <strain>BALB/cJ</strain>
        <tissue>Brain</tissue>
    </source>
</reference>
<reference key="3">
    <citation type="journal article" date="1993" name="Eur. J. Pharmacol.">
        <title>Cloning and functional expression of an apparent splice variant of the murine 5-HT3 receptor A subunit.</title>
        <authorList>
            <person name="Hope A.G."/>
            <person name="Downie D.L."/>
            <person name="Sutherland L."/>
            <person name="Lambert J.J."/>
            <person name="Peters J.A."/>
            <person name="Burchell B."/>
        </authorList>
    </citation>
    <scope>NUCLEOTIDE SEQUENCE [MRNA] (ISOFORM 5-HT3R-AS)</scope>
    <source>
        <strain>A/J</strain>
    </source>
</reference>
<reference key="4">
    <citation type="journal article" date="1994" name="Brain Res. Mol. Brain Res.">
        <title>Organization of the mouse 5-HT3 receptor gene and functional expression of two splice variants.</title>
        <authorList>
            <person name="Werner P."/>
            <person name="Kawashima E."/>
            <person name="Reid J."/>
            <person name="Hussy N."/>
            <person name="Lundstrom K."/>
            <person name="Buell G."/>
            <person name="Humbert Y."/>
            <person name="Jones K.A."/>
        </authorList>
    </citation>
    <scope>NUCLEOTIDE SEQUENCE [GENOMIC DNA] (ISOFORMS 5-HT3R-A AND 5-HT3R-AS)</scope>
    <source>
        <strain>129/Sv</strain>
    </source>
</reference>
<reference key="5">
    <citation type="journal article" date="2009" name="PLoS Biol.">
        <title>Lineage-specific biology revealed by a finished genome assembly of the mouse.</title>
        <authorList>
            <person name="Church D.M."/>
            <person name="Goodstadt L."/>
            <person name="Hillier L.W."/>
            <person name="Zody M.C."/>
            <person name="Goldstein S."/>
            <person name="She X."/>
            <person name="Bult C.J."/>
            <person name="Agarwala R."/>
            <person name="Cherry J.L."/>
            <person name="DiCuccio M."/>
            <person name="Hlavina W."/>
            <person name="Kapustin Y."/>
            <person name="Meric P."/>
            <person name="Maglott D."/>
            <person name="Birtle Z."/>
            <person name="Marques A.C."/>
            <person name="Graves T."/>
            <person name="Zhou S."/>
            <person name="Teague B."/>
            <person name="Potamousis K."/>
            <person name="Churas C."/>
            <person name="Place M."/>
            <person name="Herschleb J."/>
            <person name="Runnheim R."/>
            <person name="Forrest D."/>
            <person name="Amos-Landgraf J."/>
            <person name="Schwartz D.C."/>
            <person name="Cheng Z."/>
            <person name="Lindblad-Toh K."/>
            <person name="Eichler E.E."/>
            <person name="Ponting C.P."/>
        </authorList>
    </citation>
    <scope>NUCLEOTIDE SEQUENCE [LARGE SCALE GENOMIC DNA]</scope>
    <source>
        <strain>C57BL/6J</strain>
    </source>
</reference>
<reference evidence="7" key="6">
    <citation type="journal article" date="2014" name="Nature">
        <title>X-ray structure of the mouse serotonin 5-HT3 receptor.</title>
        <authorList>
            <person name="Hassaine G."/>
            <person name="Deluz C."/>
            <person name="Grasso L."/>
            <person name="Wyss R."/>
            <person name="Tol M.B."/>
            <person name="Hovius R."/>
            <person name="Graff A."/>
            <person name="Stahlberg H."/>
            <person name="Tomizaki T."/>
            <person name="Desmyter A."/>
            <person name="Moreau C."/>
            <person name="Li X.D."/>
            <person name="Poitevin F."/>
            <person name="Vogel H."/>
            <person name="Nury H."/>
        </authorList>
    </citation>
    <scope>X-RAY CRYSTALLOGRAPHY (3.50 ANGSTROMS) OF 28-302 AND 304-487 OF THE HOMOPENTAMERIC 5-HT3 RECEPTOR</scope>
    <scope>TOPOLOGY</scope>
</reference>